<proteinExistence type="evidence at protein level"/>
<dbReference type="EMBL" id="FN594515">
    <property type="protein sequence ID" value="CBH50809.1"/>
    <property type="molecule type" value="mRNA"/>
</dbReference>
<dbReference type="EMBL" id="FN594516">
    <property type="protein sequence ID" value="CBH50810.1"/>
    <property type="molecule type" value="mRNA"/>
</dbReference>
<dbReference type="SMR" id="C0HKG8"/>
<dbReference type="TCDB" id="8.B.19.2.7">
    <property type="family name" value="the sea anemone k+ channel blocker toxin, bcstx3 (bcstx3) family"/>
</dbReference>
<dbReference type="GO" id="GO:0005576">
    <property type="term" value="C:extracellular region"/>
    <property type="evidence" value="ECO:0007669"/>
    <property type="project" value="UniProtKB-SubCell"/>
</dbReference>
<dbReference type="GO" id="GO:0016020">
    <property type="term" value="C:membrane"/>
    <property type="evidence" value="ECO:0007669"/>
    <property type="project" value="UniProtKB-KW"/>
</dbReference>
<dbReference type="GO" id="GO:0044218">
    <property type="term" value="C:other organism cell membrane"/>
    <property type="evidence" value="ECO:0007669"/>
    <property type="project" value="UniProtKB-KW"/>
</dbReference>
<dbReference type="GO" id="GO:0090729">
    <property type="term" value="F:toxin activity"/>
    <property type="evidence" value="ECO:0007669"/>
    <property type="project" value="UniProtKB-KW"/>
</dbReference>
<dbReference type="GO" id="GO:0031640">
    <property type="term" value="P:killing of cells of another organism"/>
    <property type="evidence" value="ECO:0007669"/>
    <property type="project" value="UniProtKB-KW"/>
</dbReference>
<dbReference type="InterPro" id="IPR019553">
    <property type="entry name" value="Spider_toxin_CSTX_knottin"/>
</dbReference>
<dbReference type="InterPro" id="IPR011142">
    <property type="entry name" value="Spider_toxin_CSTX_Knottin_CS"/>
</dbReference>
<dbReference type="Pfam" id="PF10530">
    <property type="entry name" value="Toxin_35"/>
    <property type="match status" value="2"/>
</dbReference>
<dbReference type="PROSITE" id="PS60029">
    <property type="entry name" value="SPIDER_CSTX"/>
    <property type="match status" value="2"/>
</dbReference>
<organism>
    <name type="scientific">Cheiracanthium punctorium</name>
    <name type="common">Yellow sac spider</name>
    <name type="synonym">Aranea punctoria</name>
    <dbReference type="NCBI Taxonomy" id="682790"/>
    <lineage>
        <taxon>Eukaryota</taxon>
        <taxon>Metazoa</taxon>
        <taxon>Ecdysozoa</taxon>
        <taxon>Arthropoda</taxon>
        <taxon>Chelicerata</taxon>
        <taxon>Arachnida</taxon>
        <taxon>Araneae</taxon>
        <taxon>Araneomorphae</taxon>
        <taxon>Entelegynae</taxon>
        <taxon>Entelegynae incertae sedis</taxon>
        <taxon>Cheiracanthiidae</taxon>
        <taxon>Cheiracanthium</taxon>
    </lineage>
</organism>
<evidence type="ECO:0000250" key="1"/>
<evidence type="ECO:0000250" key="2">
    <source>
        <dbReference type="UniProtKB" id="P58604"/>
    </source>
</evidence>
<evidence type="ECO:0000255" key="3"/>
<evidence type="ECO:0000269" key="4">
    <source>
    </source>
</evidence>
<evidence type="ECO:0000269" key="5">
    <source>
    </source>
</evidence>
<evidence type="ECO:0000303" key="6">
    <source>
    </source>
</evidence>
<evidence type="ECO:0000303" key="7">
    <source>
    </source>
</evidence>
<evidence type="ECO:0000305" key="8"/>
<evidence type="ECO:0000305" key="9">
    <source>
    </source>
</evidence>
<evidence type="ECO:0000312" key="10">
    <source>
        <dbReference type="EMBL" id="CBH50809.1"/>
    </source>
</evidence>
<comment type="function">
    <text evidence="4 5">Spider venom toxin that exhibits cytolytic activity by forming an alpha-helix across the membrane (PubMed:20657014). Lethal to insect larvae (PubMed:20657014, PubMed:24717175). Causes instant paralysis and death in the larvae of the flesh fly (S.carnaria) at doses of 20 ug/g, at doses of less than 10 ug/g causes reversible paralysis (PubMed:20657014). Has cytolytic activity against insect Sf9 cells (PubMed:20657014). Causes stable and irreversible depolarization of fly muscle fibers, leading to contracture at higher toxin concentrations (PubMed:20657014). Destabilizes membranes (PubMed:20657014).</text>
</comment>
<comment type="subcellular location">
    <subcellularLocation>
        <location evidence="4">Secreted</location>
    </subcellularLocation>
    <subcellularLocation>
        <location evidence="4">Target cell membrane</location>
    </subcellularLocation>
    <text>Probably forms a transmembrane alpha-helix in the target cell membrane.</text>
</comment>
<comment type="tissue specificity">
    <text evidence="4">Expressed by the venom gland.</text>
</comment>
<comment type="domain">
    <text evidence="1">The presence of 'disulfide through disulfide knots' structurally defines this protein as a knottin. This toxin contains 2 'disulfide through disulfide knots' (By similarity).</text>
</comment>
<comment type="PTM">
    <text evidence="6 7">Cleavage of the propeptide depends on the processing quadruplet motif (XXXR, with at least one of X being E).</text>
</comment>
<comment type="toxic dose">
    <text evidence="4">LD(50) is 10 ug/g on S.carnaria larvae.</text>
</comment>
<comment type="similarity">
    <text evidence="8">Belongs to the neurotoxin 19 (CSTX) family. Double-CSTX subfamily.</text>
</comment>
<comment type="caution">
    <text evidence="9">Characterization of function and toxicity was performed using CpTx1, a mixture of DELTA-miturgitoxin-Cp1a, DELTA-miturgitoxin-Cp1b and DELTA-miturgitoxin-Cp1c. While it is assumed that all three are active current data cannot prove this.</text>
</comment>
<reference evidence="8 10" key="1">
    <citation type="journal article" date="2010" name="J. Biol. Chem.">
        <title>Novel class of spider toxin: active principle from the yellow sac spider Cheiracanthium punctorium venom is a unique two-domain polypeptide.</title>
        <authorList>
            <person name="Vassilevski A.A."/>
            <person name="Fedorova I.M."/>
            <person name="Maleeva E.E."/>
            <person name="Korolkova Y.V."/>
            <person name="Efimova S.S."/>
            <person name="Samsonova O.V."/>
            <person name="Schagina L.V."/>
            <person name="Feofanov A.V."/>
            <person name="Magazanik L.G."/>
            <person name="Grishin E.V."/>
        </authorList>
    </citation>
    <scope>NUCLEOTIDE SEQUENCE [MRNA]</scope>
    <scope>PROTEIN SEQUENCE OF 48-181</scope>
    <scope>FUNCTION</scope>
    <scope>SUBCELLULAR LOCATION</scope>
    <scope>TISSUE SPECIFICITY</scope>
    <scope>TOXIC DOSE</scope>
    <scope>PQM MOTIF</scope>
    <scope>AMIDATION AT TRP-181</scope>
    <source>
        <tissue evidence="4">Venom</tissue>
        <tissue evidence="10">Venom gland</tissue>
    </source>
</reference>
<reference key="2">
    <citation type="journal article" date="2012" name="J. Biol. Chem.">
        <title>A venom-derived neurotoxin, CsTx-1, from the spider Cupiennius salei exhibits cytolytic activities.</title>
        <authorList>
            <person name="Kuhn-Nentwig L."/>
            <person name="Fedorova I.M."/>
            <person name="Luscher B.P."/>
            <person name="Kopp L.S."/>
            <person name="Trachsel C."/>
            <person name="Schaller J."/>
            <person name="Vu X.L."/>
            <person name="Seebeck T."/>
            <person name="Streitberger K."/>
            <person name="Nentwig W."/>
            <person name="Sigel E."/>
            <person name="Magazanik L.G."/>
        </authorList>
    </citation>
    <scope>ALPHA-HELICAL REGION</scope>
</reference>
<reference evidence="8" key="3">
    <citation type="journal article" date="2014" name="Insect Mol. Biol.">
        <title>Structure of the yellow sac spider Cheiracanthium punctorium genes provides clues to evolution of insecticidal two-domain knottin toxins.</title>
        <authorList>
            <person name="Sachkova M.Y."/>
            <person name="Slavokhotova A.A."/>
            <person name="Grishin E.V."/>
            <person name="Vassilevski A.A."/>
        </authorList>
    </citation>
    <scope>PROTEIN SEQUENCE OF 48-67</scope>
    <scope>IDENTIFICATION BY MASS SPECTROMETRY</scope>
    <scope>PQM MOTIF</scope>
    <source>
        <tissue evidence="7">Venom</tissue>
    </source>
</reference>
<sequence length="183" mass="20819">MKFSLFFSVFFLAVLHACLSESEIDLEDEEHFMSSDSFLSEIQDESRGKTCIERNKECTNDRHGCCRGKIFKDKCTCVKNGKTEKCVCTQKKWAKIIESYIGDIPALPKPVDDKCVPKHADCSKRKDECCKGGIFKYQCKCYDMYDDDGEKTDLCGCVSPVEHQAIEGALRIAKKLIGDRWGR</sequence>
<keyword id="KW-0027">Amidation</keyword>
<keyword id="KW-0204">Cytolysis</keyword>
<keyword id="KW-0903">Direct protein sequencing</keyword>
<keyword id="KW-1015">Disulfide bond</keyword>
<keyword id="KW-0960">Knottin</keyword>
<keyword id="KW-0472">Membrane</keyword>
<keyword id="KW-0528">Neurotoxin</keyword>
<keyword id="KW-0964">Secreted</keyword>
<keyword id="KW-0732">Signal</keyword>
<keyword id="KW-1052">Target cell membrane</keyword>
<keyword id="KW-1053">Target membrane</keyword>
<keyword id="KW-0800">Toxin</keyword>
<keyword id="KW-0812">Transmembrane</keyword>
<feature type="signal peptide" evidence="3">
    <location>
        <begin position="1"/>
        <end position="20"/>
    </location>
</feature>
<feature type="propeptide" id="PRO_0000440154" evidence="3 4">
    <location>
        <begin position="21"/>
        <end position="47"/>
    </location>
</feature>
<feature type="chain" id="PRO_0000440155" description="DELTA-miturgitoxin-Cp1b" evidence="4">
    <location>
        <begin position="48"/>
        <end position="181"/>
    </location>
</feature>
<feature type="region of interest" description="Predicted alpha-helix">
    <location>
        <begin position="164"/>
        <end position="177"/>
    </location>
</feature>
<feature type="short sequence motif" description="Processing quadruplet motif" evidence="6 7">
    <location>
        <begin position="44"/>
        <end position="47"/>
    </location>
</feature>
<feature type="modified residue" description="Tryptophan amide" evidence="4">
    <location>
        <position position="181"/>
    </location>
</feature>
<feature type="disulfide bond" evidence="2">
    <location>
        <begin position="51"/>
        <end position="66"/>
    </location>
</feature>
<feature type="disulfide bond" evidence="2">
    <location>
        <begin position="58"/>
        <end position="75"/>
    </location>
</feature>
<feature type="disulfide bond" evidence="2">
    <location>
        <begin position="65"/>
        <end position="88"/>
    </location>
</feature>
<feature type="disulfide bond" evidence="2">
    <location>
        <begin position="77"/>
        <end position="86"/>
    </location>
</feature>
<feature type="disulfide bond" evidence="2">
    <location>
        <begin position="115"/>
        <end position="130"/>
    </location>
</feature>
<feature type="disulfide bond" evidence="2">
    <location>
        <begin position="122"/>
        <end position="139"/>
    </location>
</feature>
<feature type="disulfide bond" evidence="2">
    <location>
        <begin position="129"/>
        <end position="157"/>
    </location>
</feature>
<feature type="disulfide bond" evidence="2">
    <location>
        <begin position="141"/>
        <end position="155"/>
    </location>
</feature>
<protein>
    <recommendedName>
        <fullName evidence="8">DELTA-miturgitoxin-Cp1b</fullName>
        <shortName evidence="8">DELTA-MGTX-Cp1b</shortName>
    </recommendedName>
    <alternativeName>
        <fullName evidence="6">Toxin CpTx1</fullName>
    </alternativeName>
    <alternativeName>
        <fullName evidence="6 10">Toxin CpTx1b</fullName>
    </alternativeName>
</protein>
<name>TX1B_CHEPU</name>
<accession>C0HKG8</accession>
<accession>D5GSJ8</accession>
<accession>D5GSJ9</accession>
<accession>D7FBA1</accession>
<accession>D7FBA3</accession>
<accession>P86381</accession>
<accession>P86429</accession>
<accession>P86430</accession>